<evidence type="ECO:0000255" key="1">
    <source>
        <dbReference type="HAMAP-Rule" id="MF_01021"/>
    </source>
</evidence>
<name>HIS3_BURCH</name>
<feature type="chain" id="PRO_1000063392" description="Phosphoribosyl-AMP cyclohydrolase">
    <location>
        <begin position="1"/>
        <end position="138"/>
    </location>
</feature>
<feature type="binding site" evidence="1">
    <location>
        <position position="84"/>
    </location>
    <ligand>
        <name>Mg(2+)</name>
        <dbReference type="ChEBI" id="CHEBI:18420"/>
    </ligand>
</feature>
<feature type="binding site" evidence="1">
    <location>
        <position position="85"/>
    </location>
    <ligand>
        <name>Zn(2+)</name>
        <dbReference type="ChEBI" id="CHEBI:29105"/>
        <note>ligand shared between dimeric partners</note>
    </ligand>
</feature>
<feature type="binding site" evidence="1">
    <location>
        <position position="86"/>
    </location>
    <ligand>
        <name>Mg(2+)</name>
        <dbReference type="ChEBI" id="CHEBI:18420"/>
    </ligand>
</feature>
<feature type="binding site" evidence="1">
    <location>
        <position position="88"/>
    </location>
    <ligand>
        <name>Mg(2+)</name>
        <dbReference type="ChEBI" id="CHEBI:18420"/>
    </ligand>
</feature>
<feature type="binding site" evidence="1">
    <location>
        <position position="102"/>
    </location>
    <ligand>
        <name>Zn(2+)</name>
        <dbReference type="ChEBI" id="CHEBI:29105"/>
        <note>ligand shared between dimeric partners</note>
    </ligand>
</feature>
<feature type="binding site" evidence="1">
    <location>
        <position position="109"/>
    </location>
    <ligand>
        <name>Zn(2+)</name>
        <dbReference type="ChEBI" id="CHEBI:29105"/>
        <note>ligand shared between dimeric partners</note>
    </ligand>
</feature>
<protein>
    <recommendedName>
        <fullName evidence="1">Phosphoribosyl-AMP cyclohydrolase</fullName>
        <shortName evidence="1">PRA-CH</shortName>
        <ecNumber evidence="1">3.5.4.19</ecNumber>
    </recommendedName>
</protein>
<organism>
    <name type="scientific">Burkholderia cenocepacia (strain HI2424)</name>
    <dbReference type="NCBI Taxonomy" id="331272"/>
    <lineage>
        <taxon>Bacteria</taxon>
        <taxon>Pseudomonadati</taxon>
        <taxon>Pseudomonadota</taxon>
        <taxon>Betaproteobacteria</taxon>
        <taxon>Burkholderiales</taxon>
        <taxon>Burkholderiaceae</taxon>
        <taxon>Burkholderia</taxon>
        <taxon>Burkholderia cepacia complex</taxon>
    </lineage>
</organism>
<proteinExistence type="inferred from homology"/>
<accession>A0K3V9</accession>
<sequence>MNTETKSLPAWLDKVRWDDNGLVPVIAQEASTNDVLMFAWMNREALAKTIETQRAVYYSRSRKRLWFKGEESGHVQHVHEVRLDCDEDVVLLKVEQVSGIACHTGRHSCFFQKFEGTVDGGDWVAVEPVLKDPEHIYK</sequence>
<comment type="function">
    <text evidence="1">Catalyzes the hydrolysis of the adenine ring of phosphoribosyl-AMP.</text>
</comment>
<comment type="catalytic activity">
    <reaction evidence="1">
        <text>1-(5-phospho-beta-D-ribosyl)-5'-AMP + H2O = 1-(5-phospho-beta-D-ribosyl)-5-[(5-phospho-beta-D-ribosylamino)methylideneamino]imidazole-4-carboxamide</text>
        <dbReference type="Rhea" id="RHEA:20049"/>
        <dbReference type="ChEBI" id="CHEBI:15377"/>
        <dbReference type="ChEBI" id="CHEBI:58435"/>
        <dbReference type="ChEBI" id="CHEBI:59457"/>
        <dbReference type="EC" id="3.5.4.19"/>
    </reaction>
</comment>
<comment type="cofactor">
    <cofactor evidence="1">
        <name>Mg(2+)</name>
        <dbReference type="ChEBI" id="CHEBI:18420"/>
    </cofactor>
    <text evidence="1">Binds 1 Mg(2+) ion per subunit.</text>
</comment>
<comment type="cofactor">
    <cofactor evidence="1">
        <name>Zn(2+)</name>
        <dbReference type="ChEBI" id="CHEBI:29105"/>
    </cofactor>
    <text evidence="1">Binds 1 zinc ion per subunit.</text>
</comment>
<comment type="pathway">
    <text evidence="1">Amino-acid biosynthesis; L-histidine biosynthesis; L-histidine from 5-phospho-alpha-D-ribose 1-diphosphate: step 3/9.</text>
</comment>
<comment type="subunit">
    <text evidence="1">Homodimer.</text>
</comment>
<comment type="subcellular location">
    <subcellularLocation>
        <location evidence="1">Cytoplasm</location>
    </subcellularLocation>
</comment>
<comment type="similarity">
    <text evidence="1">Belongs to the PRA-CH family.</text>
</comment>
<keyword id="KW-0028">Amino-acid biosynthesis</keyword>
<keyword id="KW-0963">Cytoplasm</keyword>
<keyword id="KW-0368">Histidine biosynthesis</keyword>
<keyword id="KW-0378">Hydrolase</keyword>
<keyword id="KW-0460">Magnesium</keyword>
<keyword id="KW-0479">Metal-binding</keyword>
<keyword id="KW-0862">Zinc</keyword>
<gene>
    <name evidence="1" type="primary">hisI</name>
    <name type="ordered locus">Bcen2424_0432</name>
</gene>
<dbReference type="EC" id="3.5.4.19" evidence="1"/>
<dbReference type="EMBL" id="CP000458">
    <property type="protein sequence ID" value="ABK07186.1"/>
    <property type="molecule type" value="Genomic_DNA"/>
</dbReference>
<dbReference type="RefSeq" id="WP_011546604.1">
    <property type="nucleotide sequence ID" value="NC_008542.1"/>
</dbReference>
<dbReference type="SMR" id="A0K3V9"/>
<dbReference type="GeneID" id="83047214"/>
<dbReference type="KEGG" id="bch:Bcen2424_0432"/>
<dbReference type="HOGENOM" id="CLU_048577_5_0_4"/>
<dbReference type="UniPathway" id="UPA00031">
    <property type="reaction ID" value="UER00008"/>
</dbReference>
<dbReference type="GO" id="GO:0005737">
    <property type="term" value="C:cytoplasm"/>
    <property type="evidence" value="ECO:0007669"/>
    <property type="project" value="UniProtKB-SubCell"/>
</dbReference>
<dbReference type="GO" id="GO:0000287">
    <property type="term" value="F:magnesium ion binding"/>
    <property type="evidence" value="ECO:0007669"/>
    <property type="project" value="UniProtKB-UniRule"/>
</dbReference>
<dbReference type="GO" id="GO:0004635">
    <property type="term" value="F:phosphoribosyl-AMP cyclohydrolase activity"/>
    <property type="evidence" value="ECO:0007669"/>
    <property type="project" value="UniProtKB-UniRule"/>
</dbReference>
<dbReference type="GO" id="GO:0008270">
    <property type="term" value="F:zinc ion binding"/>
    <property type="evidence" value="ECO:0007669"/>
    <property type="project" value="UniProtKB-UniRule"/>
</dbReference>
<dbReference type="GO" id="GO:0000105">
    <property type="term" value="P:L-histidine biosynthetic process"/>
    <property type="evidence" value="ECO:0007669"/>
    <property type="project" value="UniProtKB-UniRule"/>
</dbReference>
<dbReference type="FunFam" id="3.10.20.810:FF:000001">
    <property type="entry name" value="Histidine biosynthesis bifunctional protein HisIE"/>
    <property type="match status" value="1"/>
</dbReference>
<dbReference type="Gene3D" id="3.10.20.810">
    <property type="entry name" value="Phosphoribosyl-AMP cyclohydrolase"/>
    <property type="match status" value="1"/>
</dbReference>
<dbReference type="HAMAP" id="MF_01021">
    <property type="entry name" value="HisI"/>
    <property type="match status" value="1"/>
</dbReference>
<dbReference type="InterPro" id="IPR026660">
    <property type="entry name" value="PRA-CH"/>
</dbReference>
<dbReference type="InterPro" id="IPR002496">
    <property type="entry name" value="PRib_AMP_CycHydrolase_dom"/>
</dbReference>
<dbReference type="InterPro" id="IPR038019">
    <property type="entry name" value="PRib_AMP_CycHydrolase_sf"/>
</dbReference>
<dbReference type="NCBIfam" id="NF000768">
    <property type="entry name" value="PRK00051.1"/>
    <property type="match status" value="1"/>
</dbReference>
<dbReference type="PANTHER" id="PTHR42945">
    <property type="entry name" value="HISTIDINE BIOSYNTHESIS BIFUNCTIONAL PROTEIN"/>
    <property type="match status" value="1"/>
</dbReference>
<dbReference type="PANTHER" id="PTHR42945:SF1">
    <property type="entry name" value="HISTIDINE BIOSYNTHESIS BIFUNCTIONAL PROTEIN HIS7"/>
    <property type="match status" value="1"/>
</dbReference>
<dbReference type="Pfam" id="PF01502">
    <property type="entry name" value="PRA-CH"/>
    <property type="match status" value="1"/>
</dbReference>
<dbReference type="SUPFAM" id="SSF141734">
    <property type="entry name" value="HisI-like"/>
    <property type="match status" value="1"/>
</dbReference>
<reference key="1">
    <citation type="submission" date="2006-08" db="EMBL/GenBank/DDBJ databases">
        <title>Complete sequence of chromosome 1 of Burkholderia cenocepacia HI2424.</title>
        <authorList>
            <person name="Copeland A."/>
            <person name="Lucas S."/>
            <person name="Lapidus A."/>
            <person name="Barry K."/>
            <person name="Detter J.C."/>
            <person name="Glavina del Rio T."/>
            <person name="Hammon N."/>
            <person name="Israni S."/>
            <person name="Pitluck S."/>
            <person name="Chain P."/>
            <person name="Malfatti S."/>
            <person name="Shin M."/>
            <person name="Vergez L."/>
            <person name="Schmutz J."/>
            <person name="Larimer F."/>
            <person name="Land M."/>
            <person name="Hauser L."/>
            <person name="Kyrpides N."/>
            <person name="Kim E."/>
            <person name="LiPuma J.J."/>
            <person name="Gonzalez C.F."/>
            <person name="Konstantinidis K."/>
            <person name="Tiedje J.M."/>
            <person name="Richardson P."/>
        </authorList>
    </citation>
    <scope>NUCLEOTIDE SEQUENCE [LARGE SCALE GENOMIC DNA]</scope>
    <source>
        <strain>HI2424</strain>
    </source>
</reference>